<feature type="chain" id="PRO_1000192289" description="Nucleoside diphosphate kinase">
    <location>
        <begin position="1"/>
        <end position="143"/>
    </location>
</feature>
<feature type="active site" description="Pros-phosphohistidine intermediate" evidence="3">
    <location>
        <position position="117"/>
    </location>
</feature>
<feature type="binding site" evidence="3">
    <location>
        <position position="11"/>
    </location>
    <ligand>
        <name>ATP</name>
        <dbReference type="ChEBI" id="CHEBI:30616"/>
    </ligand>
</feature>
<feature type="binding site" evidence="3">
    <location>
        <position position="59"/>
    </location>
    <ligand>
        <name>ATP</name>
        <dbReference type="ChEBI" id="CHEBI:30616"/>
    </ligand>
</feature>
<feature type="binding site" evidence="3">
    <location>
        <position position="87"/>
    </location>
    <ligand>
        <name>ATP</name>
        <dbReference type="ChEBI" id="CHEBI:30616"/>
    </ligand>
</feature>
<feature type="binding site" evidence="3">
    <location>
        <position position="93"/>
    </location>
    <ligand>
        <name>ATP</name>
        <dbReference type="ChEBI" id="CHEBI:30616"/>
    </ligand>
</feature>
<feature type="binding site" evidence="3">
    <location>
        <position position="104"/>
    </location>
    <ligand>
        <name>ATP</name>
        <dbReference type="ChEBI" id="CHEBI:30616"/>
    </ligand>
</feature>
<feature type="binding site" evidence="3">
    <location>
        <position position="114"/>
    </location>
    <ligand>
        <name>ATP</name>
        <dbReference type="ChEBI" id="CHEBI:30616"/>
    </ligand>
</feature>
<sequence length="143" mass="15536">MAIERTFSIIKPNAVAKNVIGSIFARFEAAGFKIVGTKMLHLTVEQARGFYAEHDGKPFFDGLVEFMTSGPILVSVLESENAVQRHRDLLGATNPANALAGTLRADYADSLTENGTHGSDSLESAQREIAFFFGEGEVCPRTR</sequence>
<reference key="1">
    <citation type="journal article" date="2009" name="PLoS ONE">
        <title>Salmonella paratyphi C: genetic divergence from Salmonella choleraesuis and pathogenic convergence with Salmonella typhi.</title>
        <authorList>
            <person name="Liu W.-Q."/>
            <person name="Feng Y."/>
            <person name="Wang Y."/>
            <person name="Zou Q.-H."/>
            <person name="Chen F."/>
            <person name="Guo J.-T."/>
            <person name="Peng Y.-H."/>
            <person name="Jin Y."/>
            <person name="Li Y.-G."/>
            <person name="Hu S.-N."/>
            <person name="Johnston R.N."/>
            <person name="Liu G.-R."/>
            <person name="Liu S.-L."/>
        </authorList>
    </citation>
    <scope>NUCLEOTIDE SEQUENCE [LARGE SCALE GENOMIC DNA]</scope>
    <source>
        <strain>RKS4594</strain>
    </source>
</reference>
<comment type="function">
    <text evidence="3">Major role in the synthesis of nucleoside triphosphates other than ATP. The ATP gamma phosphate is transferred to the NDP beta phosphate via a ping-pong mechanism, using a phosphorylated active-site intermediate.</text>
</comment>
<comment type="function">
    <text evidence="1">(Microbial infection) Catalyzes the phosphorylation of dZDP to dZTP, when the bacterium is infected by a phage that produces the substrate for the synthesis of dZTP (2- amino-2'-deoxyadenosine 5'-triphosphate), which is then used by the phage as a DNA polymerase substrate.</text>
</comment>
<comment type="catalytic activity">
    <reaction evidence="2">
        <text>dZDP + ATP = dZTP + ADP</text>
        <dbReference type="Rhea" id="RHEA:67644"/>
        <dbReference type="ChEBI" id="CHEBI:30616"/>
        <dbReference type="ChEBI" id="CHEBI:172929"/>
        <dbReference type="ChEBI" id="CHEBI:172931"/>
        <dbReference type="ChEBI" id="CHEBI:456216"/>
    </reaction>
</comment>
<comment type="catalytic activity">
    <reaction evidence="3">
        <text>a 2'-deoxyribonucleoside 5'-diphosphate + ATP = a 2'-deoxyribonucleoside 5'-triphosphate + ADP</text>
        <dbReference type="Rhea" id="RHEA:44640"/>
        <dbReference type="ChEBI" id="CHEBI:30616"/>
        <dbReference type="ChEBI" id="CHEBI:61560"/>
        <dbReference type="ChEBI" id="CHEBI:73316"/>
        <dbReference type="ChEBI" id="CHEBI:456216"/>
        <dbReference type="EC" id="2.7.4.6"/>
    </reaction>
</comment>
<comment type="catalytic activity">
    <reaction evidence="3">
        <text>a ribonucleoside 5'-diphosphate + ATP = a ribonucleoside 5'-triphosphate + ADP</text>
        <dbReference type="Rhea" id="RHEA:18113"/>
        <dbReference type="ChEBI" id="CHEBI:30616"/>
        <dbReference type="ChEBI" id="CHEBI:57930"/>
        <dbReference type="ChEBI" id="CHEBI:61557"/>
        <dbReference type="ChEBI" id="CHEBI:456216"/>
        <dbReference type="EC" id="2.7.4.6"/>
    </reaction>
</comment>
<comment type="cofactor">
    <cofactor evidence="3">
        <name>Mg(2+)</name>
        <dbReference type="ChEBI" id="CHEBI:18420"/>
    </cofactor>
</comment>
<comment type="pathway">
    <text evidence="2">Purine metabolism.</text>
</comment>
<comment type="subunit">
    <text evidence="3">Homotetramer.</text>
</comment>
<comment type="subcellular location">
    <subcellularLocation>
        <location evidence="3">Cytoplasm</location>
    </subcellularLocation>
</comment>
<comment type="similarity">
    <text evidence="3">Belongs to the NDK family.</text>
</comment>
<name>NDK_SALPC</name>
<dbReference type="EC" id="2.7.4.6" evidence="3"/>
<dbReference type="EMBL" id="CP000857">
    <property type="protein sequence ID" value="ACN45294.1"/>
    <property type="molecule type" value="Genomic_DNA"/>
</dbReference>
<dbReference type="RefSeq" id="WP_000963840.1">
    <property type="nucleotide sequence ID" value="NC_012125.1"/>
</dbReference>
<dbReference type="SMR" id="C0PYM7"/>
<dbReference type="KEGG" id="sei:SPC_1128"/>
<dbReference type="HOGENOM" id="CLU_060216_8_1_6"/>
<dbReference type="Proteomes" id="UP000001599">
    <property type="component" value="Chromosome"/>
</dbReference>
<dbReference type="GO" id="GO:0005737">
    <property type="term" value="C:cytoplasm"/>
    <property type="evidence" value="ECO:0007669"/>
    <property type="project" value="UniProtKB-SubCell"/>
</dbReference>
<dbReference type="GO" id="GO:0005524">
    <property type="term" value="F:ATP binding"/>
    <property type="evidence" value="ECO:0007669"/>
    <property type="project" value="UniProtKB-UniRule"/>
</dbReference>
<dbReference type="GO" id="GO:0046872">
    <property type="term" value="F:metal ion binding"/>
    <property type="evidence" value="ECO:0007669"/>
    <property type="project" value="UniProtKB-KW"/>
</dbReference>
<dbReference type="GO" id="GO:0004550">
    <property type="term" value="F:nucleoside diphosphate kinase activity"/>
    <property type="evidence" value="ECO:0007669"/>
    <property type="project" value="UniProtKB-UniRule"/>
</dbReference>
<dbReference type="GO" id="GO:0006241">
    <property type="term" value="P:CTP biosynthetic process"/>
    <property type="evidence" value="ECO:0007669"/>
    <property type="project" value="UniProtKB-UniRule"/>
</dbReference>
<dbReference type="GO" id="GO:0006183">
    <property type="term" value="P:GTP biosynthetic process"/>
    <property type="evidence" value="ECO:0007669"/>
    <property type="project" value="UniProtKB-UniRule"/>
</dbReference>
<dbReference type="GO" id="GO:0006228">
    <property type="term" value="P:UTP biosynthetic process"/>
    <property type="evidence" value="ECO:0007669"/>
    <property type="project" value="UniProtKB-UniRule"/>
</dbReference>
<dbReference type="CDD" id="cd04413">
    <property type="entry name" value="NDPk_I"/>
    <property type="match status" value="1"/>
</dbReference>
<dbReference type="FunFam" id="3.30.70.141:FF:000001">
    <property type="entry name" value="Nucleoside diphosphate kinase"/>
    <property type="match status" value="1"/>
</dbReference>
<dbReference type="Gene3D" id="3.30.70.141">
    <property type="entry name" value="Nucleoside diphosphate kinase-like domain"/>
    <property type="match status" value="1"/>
</dbReference>
<dbReference type="HAMAP" id="MF_00451">
    <property type="entry name" value="NDP_kinase"/>
    <property type="match status" value="1"/>
</dbReference>
<dbReference type="InterPro" id="IPR034907">
    <property type="entry name" value="NDK-like_dom"/>
</dbReference>
<dbReference type="InterPro" id="IPR036850">
    <property type="entry name" value="NDK-like_dom_sf"/>
</dbReference>
<dbReference type="InterPro" id="IPR001564">
    <property type="entry name" value="Nucleoside_diP_kinase"/>
</dbReference>
<dbReference type="InterPro" id="IPR023005">
    <property type="entry name" value="Nucleoside_diP_kinase_AS"/>
</dbReference>
<dbReference type="NCBIfam" id="NF001908">
    <property type="entry name" value="PRK00668.1"/>
    <property type="match status" value="1"/>
</dbReference>
<dbReference type="PANTHER" id="PTHR46161">
    <property type="entry name" value="NUCLEOSIDE DIPHOSPHATE KINASE"/>
    <property type="match status" value="1"/>
</dbReference>
<dbReference type="PANTHER" id="PTHR46161:SF3">
    <property type="entry name" value="NUCLEOSIDE DIPHOSPHATE KINASE DDB_G0292928-RELATED"/>
    <property type="match status" value="1"/>
</dbReference>
<dbReference type="Pfam" id="PF00334">
    <property type="entry name" value="NDK"/>
    <property type="match status" value="1"/>
</dbReference>
<dbReference type="PRINTS" id="PR01243">
    <property type="entry name" value="NUCDPKINASE"/>
</dbReference>
<dbReference type="SMART" id="SM00562">
    <property type="entry name" value="NDK"/>
    <property type="match status" value="1"/>
</dbReference>
<dbReference type="SUPFAM" id="SSF54919">
    <property type="entry name" value="Nucleoside diphosphate kinase, NDK"/>
    <property type="match status" value="1"/>
</dbReference>
<dbReference type="PROSITE" id="PS00469">
    <property type="entry name" value="NDPK"/>
    <property type="match status" value="1"/>
</dbReference>
<dbReference type="PROSITE" id="PS51374">
    <property type="entry name" value="NDPK_LIKE"/>
    <property type="match status" value="1"/>
</dbReference>
<proteinExistence type="inferred from homology"/>
<keyword id="KW-0067">ATP-binding</keyword>
<keyword id="KW-0963">Cytoplasm</keyword>
<keyword id="KW-0418">Kinase</keyword>
<keyword id="KW-0460">Magnesium</keyword>
<keyword id="KW-0479">Metal-binding</keyword>
<keyword id="KW-0546">Nucleotide metabolism</keyword>
<keyword id="KW-0547">Nucleotide-binding</keyword>
<keyword id="KW-0597">Phosphoprotein</keyword>
<keyword id="KW-0808">Transferase</keyword>
<evidence type="ECO:0000250" key="1">
    <source>
        <dbReference type="UniProtKB" id="Q9KNM4"/>
    </source>
</evidence>
<evidence type="ECO:0000250" key="2">
    <source>
        <dbReference type="UniProtKB" id="Q9KTX4"/>
    </source>
</evidence>
<evidence type="ECO:0000255" key="3">
    <source>
        <dbReference type="HAMAP-Rule" id="MF_00451"/>
    </source>
</evidence>
<gene>
    <name evidence="3" type="primary">ndk</name>
    <name type="ordered locus">SPC_1128</name>
</gene>
<accession>C0PYM7</accession>
<organism>
    <name type="scientific">Salmonella paratyphi C (strain RKS4594)</name>
    <dbReference type="NCBI Taxonomy" id="476213"/>
    <lineage>
        <taxon>Bacteria</taxon>
        <taxon>Pseudomonadati</taxon>
        <taxon>Pseudomonadota</taxon>
        <taxon>Gammaproteobacteria</taxon>
        <taxon>Enterobacterales</taxon>
        <taxon>Enterobacteriaceae</taxon>
        <taxon>Salmonella</taxon>
    </lineage>
</organism>
<protein>
    <recommendedName>
        <fullName evidence="3">Nucleoside diphosphate kinase</fullName>
        <shortName evidence="3">NDK</shortName>
        <shortName evidence="3">NDP kinase</shortName>
        <ecNumber evidence="3">2.7.4.6</ecNumber>
    </recommendedName>
    <alternativeName>
        <fullName evidence="3">Nucleoside-2-P kinase</fullName>
    </alternativeName>
</protein>